<proteinExistence type="evidence at transcript level"/>
<keyword id="KW-0963">Cytoplasm</keyword>
<keyword id="KW-0507">mRNA processing</keyword>
<keyword id="KW-0508">mRNA splicing</keyword>
<keyword id="KW-0509">mRNA transport</keyword>
<keyword id="KW-0866">Nonsense-mediated mRNA decay</keyword>
<keyword id="KW-0539">Nucleus</keyword>
<keyword id="KW-1185">Reference proteome</keyword>
<keyword id="KW-0694">RNA-binding</keyword>
<keyword id="KW-0747">Spliceosome</keyword>
<keyword id="KW-0810">Translation regulation</keyword>
<keyword id="KW-0813">Transport</keyword>
<organism>
    <name type="scientific">Xenopus laevis</name>
    <name type="common">African clawed frog</name>
    <dbReference type="NCBI Taxonomy" id="8355"/>
    <lineage>
        <taxon>Eukaryota</taxon>
        <taxon>Metazoa</taxon>
        <taxon>Chordata</taxon>
        <taxon>Craniata</taxon>
        <taxon>Vertebrata</taxon>
        <taxon>Euteleostomi</taxon>
        <taxon>Amphibia</taxon>
        <taxon>Batrachia</taxon>
        <taxon>Anura</taxon>
        <taxon>Pipoidea</taxon>
        <taxon>Pipidae</taxon>
        <taxon>Xenopodinae</taxon>
        <taxon>Xenopus</taxon>
        <taxon>Xenopus</taxon>
    </lineage>
</organism>
<name>RB8AA_XENLA</name>
<evidence type="ECO:0000250" key="1">
    <source>
        <dbReference type="UniProtKB" id="Q9Y5S9"/>
    </source>
</evidence>
<evidence type="ECO:0000255" key="2">
    <source>
        <dbReference type="PROSITE-ProRule" id="PRU00176"/>
    </source>
</evidence>
<evidence type="ECO:0000256" key="3">
    <source>
        <dbReference type="SAM" id="MobiDB-lite"/>
    </source>
</evidence>
<evidence type="ECO:0000305" key="4"/>
<sequence length="174" mass="19720">MADVLDLHEAGGEDFAMDEDGDDSIHKLKEKAKKRKGRGFGADEGTKTRIREVYDSVEQDGDEPGPQRSVEGWILFVTGVHEEATEEDIHDKFGEFGEIKNIHLNLDRRTGFLKGYALVEYETYKEALAAMEGLNGQDLMGQPVSVDWGFVRGPPKGKRRSGRRRSRSPERRRR</sequence>
<dbReference type="EMBL" id="AF299119">
    <property type="protein sequence ID" value="AAG27092.1"/>
    <property type="molecule type" value="mRNA"/>
</dbReference>
<dbReference type="EMBL" id="BC073361">
    <property type="protein sequence ID" value="AAH73361.1"/>
    <property type="molecule type" value="mRNA"/>
</dbReference>
<dbReference type="RefSeq" id="NP_001083872.1">
    <property type="nucleotide sequence ID" value="NM_001090403.1"/>
</dbReference>
<dbReference type="SMR" id="Q9DF42"/>
<dbReference type="DNASU" id="399167"/>
<dbReference type="GeneID" id="399167"/>
<dbReference type="KEGG" id="xla:399167"/>
<dbReference type="AGR" id="Xenbase:XB-GENE-6251029"/>
<dbReference type="CTD" id="399167"/>
<dbReference type="Xenbase" id="XB-GENE-6251029">
    <property type="gene designation" value="rbm8a.S"/>
</dbReference>
<dbReference type="OMA" id="KNMRAGR"/>
<dbReference type="OrthoDB" id="15688at2759"/>
<dbReference type="Proteomes" id="UP000186698">
    <property type="component" value="Chromosome 8S"/>
</dbReference>
<dbReference type="Bgee" id="399167">
    <property type="expression patterns" value="Expressed in egg cell and 19 other cell types or tissues"/>
</dbReference>
<dbReference type="GO" id="GO:0005737">
    <property type="term" value="C:cytoplasm"/>
    <property type="evidence" value="ECO:0007669"/>
    <property type="project" value="UniProtKB-SubCell"/>
</dbReference>
<dbReference type="GO" id="GO:0035145">
    <property type="term" value="C:exon-exon junction complex"/>
    <property type="evidence" value="ECO:0000318"/>
    <property type="project" value="GO_Central"/>
</dbReference>
<dbReference type="GO" id="GO:0016607">
    <property type="term" value="C:nuclear speck"/>
    <property type="evidence" value="ECO:0007669"/>
    <property type="project" value="UniProtKB-SubCell"/>
</dbReference>
<dbReference type="GO" id="GO:0005634">
    <property type="term" value="C:nucleus"/>
    <property type="evidence" value="ECO:0000250"/>
    <property type="project" value="UniProtKB"/>
</dbReference>
<dbReference type="GO" id="GO:0071006">
    <property type="term" value="C:U2-type catalytic step 1 spliceosome"/>
    <property type="evidence" value="ECO:0000250"/>
    <property type="project" value="UniProtKB"/>
</dbReference>
<dbReference type="GO" id="GO:0003729">
    <property type="term" value="F:mRNA binding"/>
    <property type="evidence" value="ECO:0000318"/>
    <property type="project" value="GO_Central"/>
</dbReference>
<dbReference type="GO" id="GO:0000398">
    <property type="term" value="P:mRNA splicing, via spliceosome"/>
    <property type="evidence" value="ECO:0000250"/>
    <property type="project" value="UniProtKB"/>
</dbReference>
<dbReference type="GO" id="GO:0051028">
    <property type="term" value="P:mRNA transport"/>
    <property type="evidence" value="ECO:0007669"/>
    <property type="project" value="UniProtKB-KW"/>
</dbReference>
<dbReference type="GO" id="GO:0000184">
    <property type="term" value="P:nuclear-transcribed mRNA catabolic process, nonsense-mediated decay"/>
    <property type="evidence" value="ECO:0007669"/>
    <property type="project" value="UniProtKB-KW"/>
</dbReference>
<dbReference type="GO" id="GO:0000381">
    <property type="term" value="P:regulation of alternative mRNA splicing, via spliceosome"/>
    <property type="evidence" value="ECO:0000250"/>
    <property type="project" value="UniProtKB"/>
</dbReference>
<dbReference type="GO" id="GO:0006417">
    <property type="term" value="P:regulation of translation"/>
    <property type="evidence" value="ECO:0007669"/>
    <property type="project" value="UniProtKB-KW"/>
</dbReference>
<dbReference type="GO" id="GO:0008380">
    <property type="term" value="P:RNA splicing"/>
    <property type="evidence" value="ECO:0000318"/>
    <property type="project" value="GO_Central"/>
</dbReference>
<dbReference type="CDD" id="cd12324">
    <property type="entry name" value="RRM_RBM8"/>
    <property type="match status" value="1"/>
</dbReference>
<dbReference type="FunFam" id="3.30.70.330:FF:000157">
    <property type="entry name" value="RNA-binding protein 8A"/>
    <property type="match status" value="1"/>
</dbReference>
<dbReference type="Gene3D" id="3.30.70.330">
    <property type="match status" value="1"/>
</dbReference>
<dbReference type="InterPro" id="IPR012677">
    <property type="entry name" value="Nucleotide-bd_a/b_plait_sf"/>
</dbReference>
<dbReference type="InterPro" id="IPR035979">
    <property type="entry name" value="RBD_domain_sf"/>
</dbReference>
<dbReference type="InterPro" id="IPR008111">
    <property type="entry name" value="RNA-bd_8"/>
</dbReference>
<dbReference type="InterPro" id="IPR000504">
    <property type="entry name" value="RRM_dom"/>
</dbReference>
<dbReference type="InterPro" id="IPR033744">
    <property type="entry name" value="RRM_RBM8"/>
</dbReference>
<dbReference type="PANTHER" id="PTHR45894">
    <property type="entry name" value="RNA-BINDING PROTEIN 8A"/>
    <property type="match status" value="1"/>
</dbReference>
<dbReference type="Pfam" id="PF00076">
    <property type="entry name" value="RRM_1"/>
    <property type="match status" value="1"/>
</dbReference>
<dbReference type="PRINTS" id="PR01738">
    <property type="entry name" value="RNABINDINGM8"/>
</dbReference>
<dbReference type="SMART" id="SM00360">
    <property type="entry name" value="RRM"/>
    <property type="match status" value="1"/>
</dbReference>
<dbReference type="SUPFAM" id="SSF54928">
    <property type="entry name" value="RNA-binding domain, RBD"/>
    <property type="match status" value="1"/>
</dbReference>
<dbReference type="PROSITE" id="PS50102">
    <property type="entry name" value="RRM"/>
    <property type="match status" value="1"/>
</dbReference>
<protein>
    <recommendedName>
        <fullName>RNA-binding protein 8A-A</fullName>
    </recommendedName>
    <alternativeName>
        <fullName>RNA-binding motif protein 8A-A</fullName>
    </alternativeName>
    <alternativeName>
        <fullName>Ribonucleoprotein RBM8A-A</fullName>
    </alternativeName>
</protein>
<comment type="function">
    <text evidence="1">Required for pre-mRNA splicing as component of the spliceosome (By similarity). Core component of the splicing-dependent multiprotein exon junction complex (EJC) deposited at splice junctions on mRNAs. The EJC is a dynamic structure consisting of core proteins and several peripheral nuclear and cytoplasmic associated factors that join the complex only transiently either during EJC assembly or during subsequent mRNA metabolism. The EJC marks the position of the exon-exon junction in the mature mRNA for the gene expression machinery and the core components remain bound to spliced mRNAs throughout all stages of mRNA metabolism thereby influencing downstream processes including nuclear mRNA export, subcellular mRNA localization, translation efficiency and nonsense-mediated mRNA decay (NMD). Its removal from cytoplasmic mRNAs requires translation initiation from EJC-bearing spliced mRNAs. Associates preferentially with mRNAs produced by splicing. Does not interact with pre-mRNAs, introns, or mRNAs produced from intronless cDNAs. Associates with both nuclear mRNAs and newly exported cytoplasmic mRNAs (By similarity).</text>
</comment>
<comment type="subunit">
    <text evidence="1">Part of the mRNA splicing-dependent exon junction complex (EJC) complex; the core complex contains casc3, eif4a3, magoh, and rbm8a. Identified in the spliceosome C complex. Associates with polysomes.</text>
</comment>
<comment type="subcellular location">
    <subcellularLocation>
        <location evidence="1">Nucleus</location>
    </subcellularLocation>
    <subcellularLocation>
        <location evidence="1">Nucleus speckle</location>
    </subcellularLocation>
    <subcellularLocation>
        <location evidence="1">Cytoplasm</location>
    </subcellularLocation>
    <text evidence="1">Nucleocytoplasmic shuttling protein. Travels to the cytoplasm as part of the exon junction complex (EJC) bound to mRNA.</text>
</comment>
<comment type="similarity">
    <text evidence="4">Belongs to the RBM8A family.</text>
</comment>
<accession>Q9DF42</accession>
<gene>
    <name type="primary">rbm8a-a</name>
    <name type="synonym">rbm8-a</name>
</gene>
<feature type="chain" id="PRO_0000378566" description="RNA-binding protein 8A-A">
    <location>
        <begin position="1"/>
        <end position="174"/>
    </location>
</feature>
<feature type="domain" description="RRM" evidence="2">
    <location>
        <begin position="73"/>
        <end position="151"/>
    </location>
</feature>
<feature type="region of interest" description="Disordered" evidence="3">
    <location>
        <begin position="1"/>
        <end position="70"/>
    </location>
</feature>
<feature type="region of interest" description="Disordered" evidence="3">
    <location>
        <begin position="149"/>
        <end position="174"/>
    </location>
</feature>
<feature type="compositionally biased region" description="Basic and acidic residues" evidence="3">
    <location>
        <begin position="1"/>
        <end position="11"/>
    </location>
</feature>
<feature type="compositionally biased region" description="Basic residues" evidence="3">
    <location>
        <begin position="28"/>
        <end position="38"/>
    </location>
</feature>
<feature type="compositionally biased region" description="Basic and acidic residues" evidence="3">
    <location>
        <begin position="44"/>
        <end position="54"/>
    </location>
</feature>
<feature type="compositionally biased region" description="Basic residues" evidence="3">
    <location>
        <begin position="155"/>
        <end position="174"/>
    </location>
</feature>
<reference key="1">
    <citation type="journal article" date="2000" name="Mol. Cell">
        <title>Pre-mRNA splicing imprints mRNA in the nucleus with a novel RNA-binding protein that persists in the cytoplasm.</title>
        <authorList>
            <person name="Kataoka N."/>
            <person name="Yong J."/>
            <person name="Kim V.N."/>
            <person name="Velazquez F."/>
            <person name="Perkinson R.A."/>
            <person name="Wang F."/>
            <person name="Dreyfuss G."/>
        </authorList>
    </citation>
    <scope>NUCLEOTIDE SEQUENCE [MRNA]</scope>
</reference>
<reference key="2">
    <citation type="submission" date="2004-06" db="EMBL/GenBank/DDBJ databases">
        <authorList>
            <consortium name="NIH - Xenopus Gene Collection (XGC) project"/>
        </authorList>
    </citation>
    <scope>NUCLEOTIDE SEQUENCE [LARGE SCALE MRNA]</scope>
    <source>
        <tissue>Spleen</tissue>
    </source>
</reference>